<organism>
    <name type="scientific">Anoxybacillus flavithermus (strain DSM 21510 / WK1)</name>
    <dbReference type="NCBI Taxonomy" id="491915"/>
    <lineage>
        <taxon>Bacteria</taxon>
        <taxon>Bacillati</taxon>
        <taxon>Bacillota</taxon>
        <taxon>Bacilli</taxon>
        <taxon>Bacillales</taxon>
        <taxon>Anoxybacillaceae</taxon>
        <taxon>Anoxybacillus</taxon>
    </lineage>
</organism>
<dbReference type="EC" id="6.1.1.4" evidence="1"/>
<dbReference type="EMBL" id="CP000922">
    <property type="protein sequence ID" value="ACJ32809.1"/>
    <property type="molecule type" value="Genomic_DNA"/>
</dbReference>
<dbReference type="RefSeq" id="WP_012574132.1">
    <property type="nucleotide sequence ID" value="NC_011567.1"/>
</dbReference>
<dbReference type="SMR" id="B7GK53"/>
<dbReference type="STRING" id="491915.Aflv_0425"/>
<dbReference type="GeneID" id="7036682"/>
<dbReference type="KEGG" id="afl:Aflv_0425"/>
<dbReference type="PATRIC" id="fig|491915.6.peg.435"/>
<dbReference type="eggNOG" id="COG0495">
    <property type="taxonomic scope" value="Bacteria"/>
</dbReference>
<dbReference type="HOGENOM" id="CLU_004427_0_0_9"/>
<dbReference type="Proteomes" id="UP000000742">
    <property type="component" value="Chromosome"/>
</dbReference>
<dbReference type="GO" id="GO:0005829">
    <property type="term" value="C:cytosol"/>
    <property type="evidence" value="ECO:0007669"/>
    <property type="project" value="TreeGrafter"/>
</dbReference>
<dbReference type="GO" id="GO:0002161">
    <property type="term" value="F:aminoacyl-tRNA deacylase activity"/>
    <property type="evidence" value="ECO:0007669"/>
    <property type="project" value="InterPro"/>
</dbReference>
<dbReference type="GO" id="GO:0005524">
    <property type="term" value="F:ATP binding"/>
    <property type="evidence" value="ECO:0007669"/>
    <property type="project" value="UniProtKB-UniRule"/>
</dbReference>
<dbReference type="GO" id="GO:0004823">
    <property type="term" value="F:leucine-tRNA ligase activity"/>
    <property type="evidence" value="ECO:0007669"/>
    <property type="project" value="UniProtKB-UniRule"/>
</dbReference>
<dbReference type="GO" id="GO:0006429">
    <property type="term" value="P:leucyl-tRNA aminoacylation"/>
    <property type="evidence" value="ECO:0007669"/>
    <property type="project" value="UniProtKB-UniRule"/>
</dbReference>
<dbReference type="CDD" id="cd07958">
    <property type="entry name" value="Anticodon_Ia_Leu_BEm"/>
    <property type="match status" value="1"/>
</dbReference>
<dbReference type="CDD" id="cd00812">
    <property type="entry name" value="LeuRS_core"/>
    <property type="match status" value="1"/>
</dbReference>
<dbReference type="FunFam" id="1.10.730.10:FF:000012">
    <property type="entry name" value="Leucine--tRNA ligase"/>
    <property type="match status" value="1"/>
</dbReference>
<dbReference type="FunFam" id="3.10.20.590:FF:000001">
    <property type="entry name" value="Leucine--tRNA ligase"/>
    <property type="match status" value="1"/>
</dbReference>
<dbReference type="FunFam" id="3.40.50.620:FF:000056">
    <property type="entry name" value="Leucine--tRNA ligase"/>
    <property type="match status" value="1"/>
</dbReference>
<dbReference type="FunFam" id="3.40.50.620:FF:000077">
    <property type="entry name" value="Leucine--tRNA ligase"/>
    <property type="match status" value="1"/>
</dbReference>
<dbReference type="FunFam" id="3.90.740.10:FF:000017">
    <property type="entry name" value="Leucine--tRNA ligase"/>
    <property type="match status" value="1"/>
</dbReference>
<dbReference type="FunFam" id="1.10.730.10:FF:000011">
    <property type="entry name" value="Leucine--tRNA ligase chloroplastic/mitochondrial"/>
    <property type="match status" value="1"/>
</dbReference>
<dbReference type="Gene3D" id="3.10.20.590">
    <property type="match status" value="1"/>
</dbReference>
<dbReference type="Gene3D" id="3.40.50.620">
    <property type="entry name" value="HUPs"/>
    <property type="match status" value="2"/>
</dbReference>
<dbReference type="Gene3D" id="1.10.730.10">
    <property type="entry name" value="Isoleucyl-tRNA Synthetase, Domain 1"/>
    <property type="match status" value="1"/>
</dbReference>
<dbReference type="HAMAP" id="MF_00049_B">
    <property type="entry name" value="Leu_tRNA_synth_B"/>
    <property type="match status" value="1"/>
</dbReference>
<dbReference type="InterPro" id="IPR001412">
    <property type="entry name" value="aa-tRNA-synth_I_CS"/>
</dbReference>
<dbReference type="InterPro" id="IPR002300">
    <property type="entry name" value="aa-tRNA-synth_Ia"/>
</dbReference>
<dbReference type="InterPro" id="IPR002302">
    <property type="entry name" value="Leu-tRNA-ligase"/>
</dbReference>
<dbReference type="InterPro" id="IPR025709">
    <property type="entry name" value="Leu_tRNA-synth_edit"/>
</dbReference>
<dbReference type="InterPro" id="IPR013155">
    <property type="entry name" value="M/V/L/I-tRNA-synth_anticd-bd"/>
</dbReference>
<dbReference type="InterPro" id="IPR015413">
    <property type="entry name" value="Methionyl/Leucyl_tRNA_Synth"/>
</dbReference>
<dbReference type="InterPro" id="IPR014729">
    <property type="entry name" value="Rossmann-like_a/b/a_fold"/>
</dbReference>
<dbReference type="InterPro" id="IPR009080">
    <property type="entry name" value="tRNAsynth_Ia_anticodon-bd"/>
</dbReference>
<dbReference type="InterPro" id="IPR009008">
    <property type="entry name" value="Val/Leu/Ile-tRNA-synth_edit"/>
</dbReference>
<dbReference type="NCBIfam" id="TIGR00396">
    <property type="entry name" value="leuS_bact"/>
    <property type="match status" value="1"/>
</dbReference>
<dbReference type="PANTHER" id="PTHR43740:SF2">
    <property type="entry name" value="LEUCINE--TRNA LIGASE, MITOCHONDRIAL"/>
    <property type="match status" value="1"/>
</dbReference>
<dbReference type="PANTHER" id="PTHR43740">
    <property type="entry name" value="LEUCYL-TRNA SYNTHETASE"/>
    <property type="match status" value="1"/>
</dbReference>
<dbReference type="Pfam" id="PF08264">
    <property type="entry name" value="Anticodon_1"/>
    <property type="match status" value="1"/>
</dbReference>
<dbReference type="Pfam" id="PF00133">
    <property type="entry name" value="tRNA-synt_1"/>
    <property type="match status" value="1"/>
</dbReference>
<dbReference type="Pfam" id="PF13603">
    <property type="entry name" value="tRNA-synt_1_2"/>
    <property type="match status" value="1"/>
</dbReference>
<dbReference type="Pfam" id="PF09334">
    <property type="entry name" value="tRNA-synt_1g"/>
    <property type="match status" value="1"/>
</dbReference>
<dbReference type="PRINTS" id="PR00985">
    <property type="entry name" value="TRNASYNTHLEU"/>
</dbReference>
<dbReference type="SUPFAM" id="SSF47323">
    <property type="entry name" value="Anticodon-binding domain of a subclass of class I aminoacyl-tRNA synthetases"/>
    <property type="match status" value="1"/>
</dbReference>
<dbReference type="SUPFAM" id="SSF52374">
    <property type="entry name" value="Nucleotidylyl transferase"/>
    <property type="match status" value="1"/>
</dbReference>
<dbReference type="SUPFAM" id="SSF50677">
    <property type="entry name" value="ValRS/IleRS/LeuRS editing domain"/>
    <property type="match status" value="1"/>
</dbReference>
<dbReference type="PROSITE" id="PS00178">
    <property type="entry name" value="AA_TRNA_LIGASE_I"/>
    <property type="match status" value="1"/>
</dbReference>
<evidence type="ECO:0000255" key="1">
    <source>
        <dbReference type="HAMAP-Rule" id="MF_00049"/>
    </source>
</evidence>
<comment type="catalytic activity">
    <reaction evidence="1">
        <text>tRNA(Leu) + L-leucine + ATP = L-leucyl-tRNA(Leu) + AMP + diphosphate</text>
        <dbReference type="Rhea" id="RHEA:11688"/>
        <dbReference type="Rhea" id="RHEA-COMP:9613"/>
        <dbReference type="Rhea" id="RHEA-COMP:9622"/>
        <dbReference type="ChEBI" id="CHEBI:30616"/>
        <dbReference type="ChEBI" id="CHEBI:33019"/>
        <dbReference type="ChEBI" id="CHEBI:57427"/>
        <dbReference type="ChEBI" id="CHEBI:78442"/>
        <dbReference type="ChEBI" id="CHEBI:78494"/>
        <dbReference type="ChEBI" id="CHEBI:456215"/>
        <dbReference type="EC" id="6.1.1.4"/>
    </reaction>
</comment>
<comment type="subcellular location">
    <subcellularLocation>
        <location evidence="1">Cytoplasm</location>
    </subcellularLocation>
</comment>
<comment type="similarity">
    <text evidence="1">Belongs to the class-I aminoacyl-tRNA synthetase family.</text>
</comment>
<accession>B7GK53</accession>
<name>SYL_ANOFW</name>
<proteinExistence type="inferred from homology"/>
<feature type="chain" id="PRO_1000199172" description="Leucine--tRNA ligase">
    <location>
        <begin position="1"/>
        <end position="805"/>
    </location>
</feature>
<feature type="short sequence motif" description="'HIGH' region">
    <location>
        <begin position="40"/>
        <end position="51"/>
    </location>
</feature>
<feature type="short sequence motif" description="'KMSKS' region">
    <location>
        <begin position="576"/>
        <end position="580"/>
    </location>
</feature>
<feature type="binding site" evidence="1">
    <location>
        <position position="579"/>
    </location>
    <ligand>
        <name>ATP</name>
        <dbReference type="ChEBI" id="CHEBI:30616"/>
    </ligand>
</feature>
<protein>
    <recommendedName>
        <fullName evidence="1">Leucine--tRNA ligase</fullName>
        <ecNumber evidence="1">6.1.1.4</ecNumber>
    </recommendedName>
    <alternativeName>
        <fullName evidence="1">Leucyl-tRNA synthetase</fullName>
        <shortName evidence="1">LeuRS</shortName>
    </alternativeName>
</protein>
<keyword id="KW-0030">Aminoacyl-tRNA synthetase</keyword>
<keyword id="KW-0067">ATP-binding</keyword>
<keyword id="KW-0963">Cytoplasm</keyword>
<keyword id="KW-0436">Ligase</keyword>
<keyword id="KW-0547">Nucleotide-binding</keyword>
<keyword id="KW-0648">Protein biosynthesis</keyword>
<sequence length="805" mass="92398">MSFNHREIEKKWQKYWEENKTFKTTEDDGKRKFYALDMFPYPSGAGLHVGHPEGYTATDILARMKRMQGYNVLHPMGWDAFGLPAEQYALDTGNDPAEFTEKNINNFRRQIKSLGFSYDWDREVNTTDPNYYKWTQWIFLKLYEKGLAYMDEVPVNWCPALGTVLANEEVIDGKSERGGHPVIRKPMKQWMLRITAYADRLLEDLEELDWPESIKEMQRNWIGRSEGANIHFQVDGHDETFTVFTTRPDTLFGATYAVLAPEHPLVEKITTPEQKEAVEAYLKQIQSKSDLERTDLAKEKTGVFTGAYAINPANGEKLPIWIADYVLMSYGTGAIMAVPAHDERDYEFAKKFNLPIKQVVAGGDISKEAYTGDGEHINSDFLNGLNKEEATKKMIEWLEANGKGEKKVSYRLRDWLFSRQRYWGEPIPIIHWEDGTMTPVPEEELPLVLPKTDEIKPSGTGESPLANIEEWVSVVDPKTGKKGRRETNTMPQWAGSCWYYLRYIDPHNDKQLADPEKLEKWLPVDIYIGGAEHAVLHLLYARFWHKFLYDIGVVPTKEPFQKLFNQGMILGENNEKMSKSKGNVVNPDDIVESHGADTLRLYEMFMGPLEASIAWSTKGLDGARRFLDRVWRLFVEENGELNPKIVDNPETDTLERVYHQTVKKVTEDYEALRFNTAISQLMVFINEAYKAPILPKAYMEGFVKLLSPVCPHIAEELWEKLGYSNTIAYEAWPAYDEAKLVEDEVEIVIQVNGKVRAKLHVPADATKEQLEQLAMEDEKIKEQIEGKTVRKVIAVPGKLVNIVAN</sequence>
<gene>
    <name evidence="1" type="primary">leuS</name>
    <name type="ordered locus">Aflv_0425</name>
</gene>
<reference key="1">
    <citation type="journal article" date="2008" name="Genome Biol.">
        <title>Encapsulated in silica: genome, proteome and physiology of the thermophilic bacterium Anoxybacillus flavithermus WK1.</title>
        <authorList>
            <person name="Saw J.H."/>
            <person name="Mountain B.W."/>
            <person name="Feng L."/>
            <person name="Omelchenko M.V."/>
            <person name="Hou S."/>
            <person name="Saito J.A."/>
            <person name="Stott M.B."/>
            <person name="Li D."/>
            <person name="Zhao G."/>
            <person name="Wu J."/>
            <person name="Galperin M.Y."/>
            <person name="Koonin E.V."/>
            <person name="Makarova K.S."/>
            <person name="Wolf Y.I."/>
            <person name="Rigden D.J."/>
            <person name="Dunfield P.F."/>
            <person name="Wang L."/>
            <person name="Alam M."/>
        </authorList>
    </citation>
    <scope>NUCLEOTIDE SEQUENCE [LARGE SCALE GENOMIC DNA]</scope>
    <source>
        <strain>DSM 21510 / WK1</strain>
    </source>
</reference>